<name>ISN1_NEUCR</name>
<reference key="1">
    <citation type="journal article" date="2006" name="J. Biosci.">
        <title>Translesion DNA polymerases Pol zeta, Pol eta, Pol iota, Pol kappa and Rev1 are not essential for repeat-induced point mutation in Neurospora crassa.</title>
        <authorList>
            <person name="Tamuli R."/>
            <person name="Ravindran C."/>
            <person name="Kasbekar D.P."/>
        </authorList>
    </citation>
    <scope>NUCLEOTIDE SEQUENCE [GENOMIC DNA]</scope>
    <source>
        <strain>Adiopodoume-1 / FGSC 430</strain>
    </source>
</reference>
<reference key="2">
    <citation type="journal article" date="2003" name="Nature">
        <title>The genome sequence of the filamentous fungus Neurospora crassa.</title>
        <authorList>
            <person name="Galagan J.E."/>
            <person name="Calvo S.E."/>
            <person name="Borkovich K.A."/>
            <person name="Selker E.U."/>
            <person name="Read N.D."/>
            <person name="Jaffe D.B."/>
            <person name="FitzHugh W."/>
            <person name="Ma L.-J."/>
            <person name="Smirnov S."/>
            <person name="Purcell S."/>
            <person name="Rehman B."/>
            <person name="Elkins T."/>
            <person name="Engels R."/>
            <person name="Wang S."/>
            <person name="Nielsen C.B."/>
            <person name="Butler J."/>
            <person name="Endrizzi M."/>
            <person name="Qui D."/>
            <person name="Ianakiev P."/>
            <person name="Bell-Pedersen D."/>
            <person name="Nelson M.A."/>
            <person name="Werner-Washburne M."/>
            <person name="Selitrennikoff C.P."/>
            <person name="Kinsey J.A."/>
            <person name="Braun E.L."/>
            <person name="Zelter A."/>
            <person name="Schulte U."/>
            <person name="Kothe G.O."/>
            <person name="Jedd G."/>
            <person name="Mewes H.-W."/>
            <person name="Staben C."/>
            <person name="Marcotte E."/>
            <person name="Greenberg D."/>
            <person name="Roy A."/>
            <person name="Foley K."/>
            <person name="Naylor J."/>
            <person name="Stange-Thomann N."/>
            <person name="Barrett R."/>
            <person name="Gnerre S."/>
            <person name="Kamal M."/>
            <person name="Kamvysselis M."/>
            <person name="Mauceli E.W."/>
            <person name="Bielke C."/>
            <person name="Rudd S."/>
            <person name="Frishman D."/>
            <person name="Krystofova S."/>
            <person name="Rasmussen C."/>
            <person name="Metzenberg R.L."/>
            <person name="Perkins D.D."/>
            <person name="Kroken S."/>
            <person name="Cogoni C."/>
            <person name="Macino G."/>
            <person name="Catcheside D.E.A."/>
            <person name="Li W."/>
            <person name="Pratt R.J."/>
            <person name="Osmani S.A."/>
            <person name="DeSouza C.P.C."/>
            <person name="Glass N.L."/>
            <person name="Orbach M.J."/>
            <person name="Berglund J.A."/>
            <person name="Voelker R."/>
            <person name="Yarden O."/>
            <person name="Plamann M."/>
            <person name="Seiler S."/>
            <person name="Dunlap J.C."/>
            <person name="Radford A."/>
            <person name="Aramayo R."/>
            <person name="Natvig D.O."/>
            <person name="Alex L.A."/>
            <person name="Mannhaupt G."/>
            <person name="Ebbole D.J."/>
            <person name="Freitag M."/>
            <person name="Paulsen I."/>
            <person name="Sachs M.S."/>
            <person name="Lander E.S."/>
            <person name="Nusbaum C."/>
            <person name="Birren B.W."/>
        </authorList>
    </citation>
    <scope>NUCLEOTIDE SEQUENCE [LARGE SCALE GENOMIC DNA]</scope>
    <source>
        <strain>ATCC 24698 / 74-OR23-1A / CBS 708.71 / DSM 1257 / FGSC 987</strain>
    </source>
</reference>
<sequence length="431" mass="48444">MTTRYRVEYALKTHRRDQFIEWIKALLAVPFVLYSQPHGVLEDPDRSVDTLSQTREEAHRRYSEIFRDIEAMIDDHIAHQNDAENPFPSKLKLLVPSIGPFFTRLPLEAAFKFQDNKRYISSRRFVSPSFNDIRLILNSAQIMAVTTYGTLQLATFDGDVTLYDDGQSLEPTSPVIPRLLDLLRKNVKIGIVTAAGYTTADRYYSRLHGLLDAMANSADLTPSQKQSLVVMGGEANYLFEFDSSSPHLLAPVPRQHWLTPEMAAWNEQDIAQLLDVAEAALRDCIKTLNLPATLMRKDRAVGIIPVSPEIRIPRESLEETVLLVQKILELSTVGRSRRVPFCAFNGGRDVFVDIGDKSWGVTVCQRWFSQKEGPHGVIKGENTLHVGDQFLSAGANDFRARSVGTTAWIASPVETVELLDELAELMGKKMS</sequence>
<comment type="function">
    <text evidence="2">IMP-specific 5'-nucleotidase involved in IMP (inositol monophosphate) degradation.</text>
</comment>
<comment type="catalytic activity">
    <reaction evidence="2">
        <text>IMP + H2O = inosine + phosphate</text>
        <dbReference type="Rhea" id="RHEA:27718"/>
        <dbReference type="ChEBI" id="CHEBI:15377"/>
        <dbReference type="ChEBI" id="CHEBI:17596"/>
        <dbReference type="ChEBI" id="CHEBI:43474"/>
        <dbReference type="ChEBI" id="CHEBI:58053"/>
        <dbReference type="EC" id="3.1.3.99"/>
    </reaction>
</comment>
<comment type="cofactor">
    <cofactor evidence="2">
        <name>Mg(2+)</name>
        <dbReference type="ChEBI" id="CHEBI:18420"/>
    </cofactor>
</comment>
<comment type="activity regulation">
    <text evidence="1 2">Allosterically activated by ATP (By similarity). ATP binding is a prerequisite to magnesium and substrate binding. ATP binds to 2 of the subunits in the homotetramer inducing a closure of these 2 subunits and the release of the C-terminal loop, thereby activating the enzyme (By similarity).</text>
</comment>
<comment type="subunit">
    <text evidence="2">Homotetramer.</text>
</comment>
<comment type="similarity">
    <text evidence="3">Belongs to the ISN1 family.</text>
</comment>
<comment type="sequence caution" evidence="3">
    <conflict type="erroneous gene model prediction">
        <sequence resource="EMBL-CDS" id="ABD57298"/>
    </conflict>
</comment>
<evidence type="ECO:0000250" key="1">
    <source>
        <dbReference type="UniProtKB" id="A0A144A134"/>
    </source>
</evidence>
<evidence type="ECO:0000250" key="2">
    <source>
        <dbReference type="UniProtKB" id="Q99312"/>
    </source>
</evidence>
<evidence type="ECO:0000305" key="3"/>
<protein>
    <recommendedName>
        <fullName>IMP-specific 5'-nucleotidase 1</fullName>
        <ecNumber evidence="2">3.1.3.99</ecNumber>
    </recommendedName>
</protein>
<dbReference type="EC" id="3.1.3.99" evidence="2"/>
<dbReference type="EMBL" id="DQ387872">
    <property type="protein sequence ID" value="ABD57298.1"/>
    <property type="status" value="ALT_SEQ"/>
    <property type="molecule type" value="Genomic_DNA"/>
</dbReference>
<dbReference type="EMBL" id="CM002236">
    <property type="protein sequence ID" value="ESA43848.1"/>
    <property type="molecule type" value="Genomic_DNA"/>
</dbReference>
<dbReference type="RefSeq" id="XP_011392906.1">
    <property type="nucleotide sequence ID" value="XM_011394604.1"/>
</dbReference>
<dbReference type="SMR" id="Q7SDZ1"/>
<dbReference type="FunCoup" id="Q7SDZ1">
    <property type="interactions" value="85"/>
</dbReference>
<dbReference type="STRING" id="367110.Q7SDZ1"/>
<dbReference type="PaxDb" id="5141-EFNCRP00000001288"/>
<dbReference type="EnsemblFungi" id="ESA43848">
    <property type="protein sequence ID" value="ESA43848"/>
    <property type="gene ID" value="NCU01945"/>
</dbReference>
<dbReference type="GeneID" id="23568370"/>
<dbReference type="KEGG" id="ncr:NCU01945"/>
<dbReference type="VEuPathDB" id="FungiDB:NCU01945"/>
<dbReference type="HOGENOM" id="CLU_031816_1_0_1"/>
<dbReference type="InParanoid" id="Q7SDZ1"/>
<dbReference type="OrthoDB" id="185373at2759"/>
<dbReference type="Proteomes" id="UP000001805">
    <property type="component" value="Chromosome 1, Linkage Group I"/>
</dbReference>
<dbReference type="GO" id="GO:0005524">
    <property type="term" value="F:ATP binding"/>
    <property type="evidence" value="ECO:0007669"/>
    <property type="project" value="UniProtKB-KW"/>
</dbReference>
<dbReference type="GO" id="GO:0050483">
    <property type="term" value="F:IMP 5'-nucleotidase activity"/>
    <property type="evidence" value="ECO:0000318"/>
    <property type="project" value="GO_Central"/>
</dbReference>
<dbReference type="GO" id="GO:0000287">
    <property type="term" value="F:magnesium ion binding"/>
    <property type="evidence" value="ECO:0007669"/>
    <property type="project" value="InterPro"/>
</dbReference>
<dbReference type="GO" id="GO:0006190">
    <property type="term" value="P:inosine salvage"/>
    <property type="evidence" value="ECO:0000318"/>
    <property type="project" value="GO_Central"/>
</dbReference>
<dbReference type="GO" id="GO:0071590">
    <property type="term" value="P:nicotinamide riboside biosynthetic process"/>
    <property type="evidence" value="ECO:0000318"/>
    <property type="project" value="GO_Central"/>
</dbReference>
<dbReference type="GO" id="GO:0071592">
    <property type="term" value="P:nicotinic acid riboside biosynthetic process"/>
    <property type="evidence" value="ECO:0000318"/>
    <property type="project" value="GO_Central"/>
</dbReference>
<dbReference type="GO" id="GO:0009117">
    <property type="term" value="P:nucleotide metabolic process"/>
    <property type="evidence" value="ECO:0007669"/>
    <property type="project" value="UniProtKB-KW"/>
</dbReference>
<dbReference type="InterPro" id="IPR036412">
    <property type="entry name" value="HAD-like_sf"/>
</dbReference>
<dbReference type="InterPro" id="IPR009453">
    <property type="entry name" value="ISN1"/>
</dbReference>
<dbReference type="PANTHER" id="PTHR28213">
    <property type="entry name" value="IMP-SPECIFIC 5'-NUCLEOTIDASE 1"/>
    <property type="match status" value="1"/>
</dbReference>
<dbReference type="PANTHER" id="PTHR28213:SF1">
    <property type="entry name" value="IMP-SPECIFIC 5'-NUCLEOTIDASE 1"/>
    <property type="match status" value="1"/>
</dbReference>
<dbReference type="Pfam" id="PF06437">
    <property type="entry name" value="ISN1"/>
    <property type="match status" value="1"/>
</dbReference>
<dbReference type="PIRSF" id="PIRSF028836">
    <property type="entry name" value="ISN1"/>
    <property type="match status" value="1"/>
</dbReference>
<dbReference type="SUPFAM" id="SSF56784">
    <property type="entry name" value="HAD-like"/>
    <property type="match status" value="1"/>
</dbReference>
<organism>
    <name type="scientific">Neurospora crassa (strain ATCC 24698 / 74-OR23-1A / CBS 708.71 / DSM 1257 / FGSC 987)</name>
    <dbReference type="NCBI Taxonomy" id="367110"/>
    <lineage>
        <taxon>Eukaryota</taxon>
        <taxon>Fungi</taxon>
        <taxon>Dikarya</taxon>
        <taxon>Ascomycota</taxon>
        <taxon>Pezizomycotina</taxon>
        <taxon>Sordariomycetes</taxon>
        <taxon>Sordariomycetidae</taxon>
        <taxon>Sordariales</taxon>
        <taxon>Sordariaceae</taxon>
        <taxon>Neurospora</taxon>
    </lineage>
</organism>
<keyword id="KW-0067">ATP-binding</keyword>
<keyword id="KW-0378">Hydrolase</keyword>
<keyword id="KW-0460">Magnesium</keyword>
<keyword id="KW-0479">Metal-binding</keyword>
<keyword id="KW-0546">Nucleotide metabolism</keyword>
<keyword id="KW-0547">Nucleotide-binding</keyword>
<keyword id="KW-1185">Reference proteome</keyword>
<feature type="chain" id="PRO_0000084254" description="IMP-specific 5'-nucleotidase 1">
    <location>
        <begin position="1"/>
        <end position="431"/>
    </location>
</feature>
<feature type="active site" description="Nucleophile" evidence="1">
    <location>
        <position position="157"/>
    </location>
</feature>
<feature type="active site" description="Proton donor" evidence="1">
    <location>
        <position position="159"/>
    </location>
</feature>
<feature type="binding site" evidence="1">
    <location>
        <position position="117"/>
    </location>
    <ligand>
        <name>ATP</name>
        <dbReference type="ChEBI" id="CHEBI:30616"/>
        <note>allosteric activator</note>
    </ligand>
</feature>
<feature type="binding site" evidence="1">
    <location>
        <position position="157"/>
    </location>
    <ligand>
        <name>IMP</name>
        <dbReference type="ChEBI" id="CHEBI:58053"/>
    </ligand>
</feature>
<feature type="binding site" evidence="1">
    <location>
        <position position="157"/>
    </location>
    <ligand>
        <name>Mg(2+)</name>
        <dbReference type="ChEBI" id="CHEBI:18420"/>
    </ligand>
</feature>
<feature type="binding site" evidence="1">
    <location>
        <position position="159"/>
    </location>
    <ligand>
        <name>IMP</name>
        <dbReference type="ChEBI" id="CHEBI:58053"/>
    </ligand>
</feature>
<feature type="binding site" evidence="1">
    <location>
        <position position="159"/>
    </location>
    <ligand>
        <name>Mg(2+)</name>
        <dbReference type="ChEBI" id="CHEBI:18420"/>
    </ligand>
</feature>
<feature type="binding site" evidence="1">
    <location>
        <position position="165"/>
    </location>
    <ligand>
        <name>IMP</name>
        <dbReference type="ChEBI" id="CHEBI:58053"/>
    </ligand>
</feature>
<feature type="binding site" evidence="1">
    <location>
        <position position="193"/>
    </location>
    <ligand>
        <name>IMP</name>
        <dbReference type="ChEBI" id="CHEBI:58053"/>
    </ligand>
</feature>
<feature type="binding site" evidence="1">
    <location>
        <position position="349"/>
    </location>
    <ligand>
        <name>IMP</name>
        <dbReference type="ChEBI" id="CHEBI:58053"/>
    </ligand>
</feature>
<feature type="binding site" evidence="1">
    <location>
        <position position="357"/>
    </location>
    <ligand>
        <name>IMP</name>
        <dbReference type="ChEBI" id="CHEBI:58053"/>
    </ligand>
</feature>
<feature type="binding site" evidence="1">
    <location>
        <position position="388"/>
    </location>
    <ligand>
        <name>Mg(2+)</name>
        <dbReference type="ChEBI" id="CHEBI:18420"/>
    </ligand>
</feature>
<gene>
    <name type="primary">isn-1</name>
    <name type="ORF">NCU01945</name>
    <name type="ORF">NCU10480</name>
</gene>
<accession>Q7SDZ1</accession>
<accession>A7UVZ0</accession>
<accession>Q27QA3</accession>
<accession>V5INY2</accession>
<proteinExistence type="inferred from homology"/>